<organism>
    <name type="scientific">Borreliella afzelii (strain PKo)</name>
    <name type="common">Borrelia afzelii</name>
    <dbReference type="NCBI Taxonomy" id="390236"/>
    <lineage>
        <taxon>Bacteria</taxon>
        <taxon>Pseudomonadati</taxon>
        <taxon>Spirochaetota</taxon>
        <taxon>Spirochaetia</taxon>
        <taxon>Spirochaetales</taxon>
        <taxon>Borreliaceae</taxon>
        <taxon>Borreliella</taxon>
    </lineage>
</organism>
<protein>
    <recommendedName>
        <fullName evidence="1">Phosphate import ATP-binding protein PstB</fullName>
        <ecNumber evidence="1">7.3.2.1</ecNumber>
    </recommendedName>
    <alternativeName>
        <fullName evidence="1">ABC phosphate transporter</fullName>
    </alternativeName>
    <alternativeName>
        <fullName evidence="1">Phosphate-transporting ATPase</fullName>
    </alternativeName>
</protein>
<comment type="function">
    <text evidence="1">Part of the ABC transporter complex PstSACB involved in phosphate import. Responsible for energy coupling to the transport system.</text>
</comment>
<comment type="catalytic activity">
    <reaction evidence="1">
        <text>phosphate(out) + ATP + H2O = ADP + 2 phosphate(in) + H(+)</text>
        <dbReference type="Rhea" id="RHEA:24440"/>
        <dbReference type="ChEBI" id="CHEBI:15377"/>
        <dbReference type="ChEBI" id="CHEBI:15378"/>
        <dbReference type="ChEBI" id="CHEBI:30616"/>
        <dbReference type="ChEBI" id="CHEBI:43474"/>
        <dbReference type="ChEBI" id="CHEBI:456216"/>
        <dbReference type="EC" id="7.3.2.1"/>
    </reaction>
</comment>
<comment type="subunit">
    <text evidence="1">The complex is composed of two ATP-binding proteins (PstB), two transmembrane proteins (PstC and PstA) and a solute-binding protein (PstS).</text>
</comment>
<comment type="subcellular location">
    <subcellularLocation>
        <location evidence="1">Cell inner membrane</location>
        <topology evidence="1">Peripheral membrane protein</topology>
    </subcellularLocation>
</comment>
<comment type="similarity">
    <text evidence="1">Belongs to the ABC transporter superfamily. Phosphate importer (TC 3.A.1.7) family.</text>
</comment>
<gene>
    <name evidence="1" type="primary">pstB</name>
    <name type="ordered locus">BAPKO_0226</name>
    <name type="ordered locus">BafPKo_0221</name>
</gene>
<accession>Q0SNU4</accession>
<accession>G0IR62</accession>
<name>PSTB_BORAP</name>
<proteinExistence type="inferred from homology"/>
<sequence length="260" mass="29429">MVKEKDKPKNEIIIETENLNLFYTDFKALNEINIKILKNSITALIGPSGCGKSTFLRTLNRMNDLVEGIKIEGNVIYEGKNIYSNNFDILELRRKIGMVFQTPNPFLMSIYDNISYGPKIHGTKDKKKLDEIVEQSLKKSALWDEVKDKLNTNALSLSGGQQQRLCIARTLAIEPNVILMDEPTSALDPISTGKIEELIINLKESYTIIIVTHNMQQAGRISDRTAFFLNGCIEEESPTDELFFNPKNTKTEEYISGKFG</sequence>
<reference key="1">
    <citation type="journal article" date="2006" name="BMC Genomics">
        <title>Comparative genome analysis: selection pressure on the Borrelia vls cassettes is essential for infectivity.</title>
        <authorList>
            <person name="Gloeckner G."/>
            <person name="Schulte-Spechtel U."/>
            <person name="Schilhabel M."/>
            <person name="Felder M."/>
            <person name="Suehnel J."/>
            <person name="Wilske B."/>
            <person name="Platzer M."/>
        </authorList>
    </citation>
    <scope>NUCLEOTIDE SEQUENCE [LARGE SCALE GENOMIC DNA]</scope>
    <source>
        <strain>PKo</strain>
    </source>
</reference>
<reference key="2">
    <citation type="journal article" date="2011" name="J. Bacteriol.">
        <title>Whole-genome sequences of two Borrelia afzelii and two Borrelia garinii Lyme disease agent isolates.</title>
        <authorList>
            <person name="Casjens S.R."/>
            <person name="Mongodin E.F."/>
            <person name="Qiu W.G."/>
            <person name="Dunn J.J."/>
            <person name="Luft B.J."/>
            <person name="Fraser-Liggett C.M."/>
            <person name="Schutzer S.E."/>
        </authorList>
    </citation>
    <scope>NUCLEOTIDE SEQUENCE [LARGE SCALE GENOMIC DNA]</scope>
    <source>
        <strain>PKo</strain>
    </source>
</reference>
<evidence type="ECO:0000255" key="1">
    <source>
        <dbReference type="HAMAP-Rule" id="MF_01702"/>
    </source>
</evidence>
<keyword id="KW-0067">ATP-binding</keyword>
<keyword id="KW-0997">Cell inner membrane</keyword>
<keyword id="KW-1003">Cell membrane</keyword>
<keyword id="KW-0472">Membrane</keyword>
<keyword id="KW-0547">Nucleotide-binding</keyword>
<keyword id="KW-0592">Phosphate transport</keyword>
<keyword id="KW-1278">Translocase</keyword>
<keyword id="KW-0813">Transport</keyword>
<feature type="chain" id="PRO_0000272427" description="Phosphate import ATP-binding protein PstB">
    <location>
        <begin position="1"/>
        <end position="260"/>
    </location>
</feature>
<feature type="domain" description="ABC transporter" evidence="1">
    <location>
        <begin position="14"/>
        <end position="255"/>
    </location>
</feature>
<feature type="binding site" evidence="1">
    <location>
        <begin position="46"/>
        <end position="53"/>
    </location>
    <ligand>
        <name>ATP</name>
        <dbReference type="ChEBI" id="CHEBI:30616"/>
    </ligand>
</feature>
<dbReference type="EC" id="7.3.2.1" evidence="1"/>
<dbReference type="EMBL" id="CP000395">
    <property type="protein sequence ID" value="ABH01484.1"/>
    <property type="molecule type" value="Genomic_DNA"/>
</dbReference>
<dbReference type="EMBL" id="CP002933">
    <property type="protein sequence ID" value="AEL69448.1"/>
    <property type="molecule type" value="Genomic_DNA"/>
</dbReference>
<dbReference type="RefSeq" id="WP_004790470.1">
    <property type="nucleotide sequence ID" value="NZ_CP160066.1"/>
</dbReference>
<dbReference type="SMR" id="Q0SNU4"/>
<dbReference type="STRING" id="29518.BLA32_03205"/>
<dbReference type="GeneID" id="77265060"/>
<dbReference type="KEGG" id="baf:BAPKO_0226"/>
<dbReference type="KEGG" id="bafz:BafPKo_0221"/>
<dbReference type="PATRIC" id="fig|390236.22.peg.214"/>
<dbReference type="eggNOG" id="COG1117">
    <property type="taxonomic scope" value="Bacteria"/>
</dbReference>
<dbReference type="HOGENOM" id="CLU_000604_1_22_12"/>
<dbReference type="OrthoDB" id="9805538at2"/>
<dbReference type="Proteomes" id="UP000005216">
    <property type="component" value="Chromosome"/>
</dbReference>
<dbReference type="GO" id="GO:0005886">
    <property type="term" value="C:plasma membrane"/>
    <property type="evidence" value="ECO:0007669"/>
    <property type="project" value="UniProtKB-SubCell"/>
</dbReference>
<dbReference type="GO" id="GO:0005524">
    <property type="term" value="F:ATP binding"/>
    <property type="evidence" value="ECO:0007669"/>
    <property type="project" value="UniProtKB-KW"/>
</dbReference>
<dbReference type="GO" id="GO:0016887">
    <property type="term" value="F:ATP hydrolysis activity"/>
    <property type="evidence" value="ECO:0007669"/>
    <property type="project" value="InterPro"/>
</dbReference>
<dbReference type="GO" id="GO:0015415">
    <property type="term" value="F:ATPase-coupled phosphate ion transmembrane transporter activity"/>
    <property type="evidence" value="ECO:0007669"/>
    <property type="project" value="UniProtKB-EC"/>
</dbReference>
<dbReference type="GO" id="GO:0035435">
    <property type="term" value="P:phosphate ion transmembrane transport"/>
    <property type="evidence" value="ECO:0007669"/>
    <property type="project" value="InterPro"/>
</dbReference>
<dbReference type="CDD" id="cd03260">
    <property type="entry name" value="ABC_PstB_phosphate_transporter"/>
    <property type="match status" value="1"/>
</dbReference>
<dbReference type="Gene3D" id="3.40.50.300">
    <property type="entry name" value="P-loop containing nucleotide triphosphate hydrolases"/>
    <property type="match status" value="1"/>
</dbReference>
<dbReference type="InterPro" id="IPR003593">
    <property type="entry name" value="AAA+_ATPase"/>
</dbReference>
<dbReference type="InterPro" id="IPR003439">
    <property type="entry name" value="ABC_transporter-like_ATP-bd"/>
</dbReference>
<dbReference type="InterPro" id="IPR017871">
    <property type="entry name" value="ABC_transporter-like_CS"/>
</dbReference>
<dbReference type="InterPro" id="IPR027417">
    <property type="entry name" value="P-loop_NTPase"/>
</dbReference>
<dbReference type="InterPro" id="IPR005670">
    <property type="entry name" value="PstB-like"/>
</dbReference>
<dbReference type="NCBIfam" id="TIGR00972">
    <property type="entry name" value="3a0107s01c2"/>
    <property type="match status" value="1"/>
</dbReference>
<dbReference type="PANTHER" id="PTHR43423">
    <property type="entry name" value="ABC TRANSPORTER I FAMILY MEMBER 17"/>
    <property type="match status" value="1"/>
</dbReference>
<dbReference type="PANTHER" id="PTHR43423:SF1">
    <property type="entry name" value="ABC TRANSPORTER I FAMILY MEMBER 17"/>
    <property type="match status" value="1"/>
</dbReference>
<dbReference type="Pfam" id="PF00005">
    <property type="entry name" value="ABC_tran"/>
    <property type="match status" value="1"/>
</dbReference>
<dbReference type="SMART" id="SM00382">
    <property type="entry name" value="AAA"/>
    <property type="match status" value="1"/>
</dbReference>
<dbReference type="SUPFAM" id="SSF52540">
    <property type="entry name" value="P-loop containing nucleoside triphosphate hydrolases"/>
    <property type="match status" value="1"/>
</dbReference>
<dbReference type="PROSITE" id="PS00211">
    <property type="entry name" value="ABC_TRANSPORTER_1"/>
    <property type="match status" value="1"/>
</dbReference>
<dbReference type="PROSITE" id="PS50893">
    <property type="entry name" value="ABC_TRANSPORTER_2"/>
    <property type="match status" value="1"/>
</dbReference>
<dbReference type="PROSITE" id="PS51238">
    <property type="entry name" value="PSTB"/>
    <property type="match status" value="1"/>
</dbReference>